<gene>
    <name evidence="1" type="primary">aroA</name>
    <name type="ordered locus">JJD26997_0918</name>
</gene>
<evidence type="ECO:0000255" key="1">
    <source>
        <dbReference type="HAMAP-Rule" id="MF_00210"/>
    </source>
</evidence>
<evidence type="ECO:0000305" key="2"/>
<organism>
    <name type="scientific">Campylobacter jejuni subsp. doylei (strain ATCC BAA-1458 / RM4099 / 269.97)</name>
    <dbReference type="NCBI Taxonomy" id="360109"/>
    <lineage>
        <taxon>Bacteria</taxon>
        <taxon>Pseudomonadati</taxon>
        <taxon>Campylobacterota</taxon>
        <taxon>Epsilonproteobacteria</taxon>
        <taxon>Campylobacterales</taxon>
        <taxon>Campylobacteraceae</taxon>
        <taxon>Campylobacter</taxon>
    </lineage>
</organism>
<protein>
    <recommendedName>
        <fullName evidence="1">3-phosphoshikimate 1-carboxyvinyltransferase</fullName>
        <ecNumber evidence="1">2.5.1.19</ecNumber>
    </recommendedName>
    <alternativeName>
        <fullName evidence="1">5-enolpyruvylshikimate-3-phosphate synthase</fullName>
        <shortName evidence="1">EPSP synthase</shortName>
        <shortName evidence="1">EPSPS</shortName>
    </alternativeName>
</protein>
<proteinExistence type="inferred from homology"/>
<accession>A7H3F2</accession>
<reference key="1">
    <citation type="submission" date="2007-07" db="EMBL/GenBank/DDBJ databases">
        <title>Complete genome sequence of Campylobacter jejuni subsp doylei 269.97 isolated from human blood.</title>
        <authorList>
            <person name="Fouts D.E."/>
            <person name="Mongodin E.F."/>
            <person name="Puiu D."/>
            <person name="Sebastian Y."/>
            <person name="Miller W.G."/>
            <person name="Mandrell R.E."/>
            <person name="Lastovica A.J."/>
            <person name="Nelson K.E."/>
        </authorList>
    </citation>
    <scope>NUCLEOTIDE SEQUENCE [LARGE SCALE GENOMIC DNA]</scope>
    <source>
        <strain>ATCC BAA-1458 / RM4099 / 269.97</strain>
    </source>
</reference>
<name>AROA_CAMJD</name>
<dbReference type="EC" id="2.5.1.19" evidence="1"/>
<dbReference type="EMBL" id="CP000768">
    <property type="protein sequence ID" value="ABS43964.1"/>
    <property type="status" value="ALT_INIT"/>
    <property type="molecule type" value="Genomic_DNA"/>
</dbReference>
<dbReference type="SMR" id="A7H3F2"/>
<dbReference type="KEGG" id="cjd:JJD26997_0918"/>
<dbReference type="HOGENOM" id="CLU_024321_0_1_7"/>
<dbReference type="UniPathway" id="UPA00053">
    <property type="reaction ID" value="UER00089"/>
</dbReference>
<dbReference type="Proteomes" id="UP000002302">
    <property type="component" value="Chromosome"/>
</dbReference>
<dbReference type="GO" id="GO:0005737">
    <property type="term" value="C:cytoplasm"/>
    <property type="evidence" value="ECO:0007669"/>
    <property type="project" value="UniProtKB-SubCell"/>
</dbReference>
<dbReference type="GO" id="GO:0003866">
    <property type="term" value="F:3-phosphoshikimate 1-carboxyvinyltransferase activity"/>
    <property type="evidence" value="ECO:0007669"/>
    <property type="project" value="UniProtKB-UniRule"/>
</dbReference>
<dbReference type="GO" id="GO:0008652">
    <property type="term" value="P:amino acid biosynthetic process"/>
    <property type="evidence" value="ECO:0007669"/>
    <property type="project" value="UniProtKB-KW"/>
</dbReference>
<dbReference type="GO" id="GO:0009073">
    <property type="term" value="P:aromatic amino acid family biosynthetic process"/>
    <property type="evidence" value="ECO:0007669"/>
    <property type="project" value="UniProtKB-KW"/>
</dbReference>
<dbReference type="GO" id="GO:0009423">
    <property type="term" value="P:chorismate biosynthetic process"/>
    <property type="evidence" value="ECO:0007669"/>
    <property type="project" value="UniProtKB-UniRule"/>
</dbReference>
<dbReference type="CDD" id="cd01556">
    <property type="entry name" value="EPSP_synthase"/>
    <property type="match status" value="1"/>
</dbReference>
<dbReference type="FunFam" id="3.65.10.10:FF:000005">
    <property type="entry name" value="3-phosphoshikimate 1-carboxyvinyltransferase"/>
    <property type="match status" value="1"/>
</dbReference>
<dbReference type="Gene3D" id="3.65.10.10">
    <property type="entry name" value="Enolpyruvate transferase domain"/>
    <property type="match status" value="2"/>
</dbReference>
<dbReference type="HAMAP" id="MF_00210">
    <property type="entry name" value="EPSP_synth"/>
    <property type="match status" value="1"/>
</dbReference>
<dbReference type="InterPro" id="IPR001986">
    <property type="entry name" value="Enolpyruvate_Tfrase_dom"/>
</dbReference>
<dbReference type="InterPro" id="IPR036968">
    <property type="entry name" value="Enolpyruvate_Tfrase_sf"/>
</dbReference>
<dbReference type="InterPro" id="IPR006264">
    <property type="entry name" value="EPSP_synthase"/>
</dbReference>
<dbReference type="InterPro" id="IPR023193">
    <property type="entry name" value="EPSP_synthase_CS"/>
</dbReference>
<dbReference type="InterPro" id="IPR013792">
    <property type="entry name" value="RNA3'P_cycl/enolpyr_Trfase_a/b"/>
</dbReference>
<dbReference type="NCBIfam" id="TIGR01356">
    <property type="entry name" value="aroA"/>
    <property type="match status" value="1"/>
</dbReference>
<dbReference type="PANTHER" id="PTHR21090">
    <property type="entry name" value="AROM/DEHYDROQUINATE SYNTHASE"/>
    <property type="match status" value="1"/>
</dbReference>
<dbReference type="PANTHER" id="PTHR21090:SF5">
    <property type="entry name" value="PENTAFUNCTIONAL AROM POLYPEPTIDE"/>
    <property type="match status" value="1"/>
</dbReference>
<dbReference type="Pfam" id="PF00275">
    <property type="entry name" value="EPSP_synthase"/>
    <property type="match status" value="1"/>
</dbReference>
<dbReference type="PIRSF" id="PIRSF000505">
    <property type="entry name" value="EPSPS"/>
    <property type="match status" value="1"/>
</dbReference>
<dbReference type="SUPFAM" id="SSF55205">
    <property type="entry name" value="EPT/RTPC-like"/>
    <property type="match status" value="1"/>
</dbReference>
<dbReference type="PROSITE" id="PS00104">
    <property type="entry name" value="EPSP_SYNTHASE_1"/>
    <property type="match status" value="1"/>
</dbReference>
<dbReference type="PROSITE" id="PS00885">
    <property type="entry name" value="EPSP_SYNTHASE_2"/>
    <property type="match status" value="1"/>
</dbReference>
<sequence>MKIYKLQTPVNTILENIAADKSISHRFAIFSLLTQGENKARNYLLAQDTLNTLEIIKNLGAKIEQKDSCVKIIPPKEILSPNCILDCGNSGTAMRLMIGFLAGISGFFVLSGDKFLNNRPMRRISKPLTQIGARIYGRNEANLAPLCIEGQNLKAFNYKSEISSAQVKTAMILSAFRADNICTFSEISLSRNHSENMLKAMKAPMRVSNDGLNLEISPLKKPLKAQNIIIPNDPSSAFYFALAAIILPKSQIILKNILLNPTRIEAYKILQKMGAKLEMTITQNDFETIGEIRVESSKLNGIEVKDNIAWLIDEAPALAIAFALAKGKSNLVNAKELRVKESDRIAVMVENLKLCGVEAKEFDDGFEIEGGCELKSSKIKSYGDHRIAMSFAILGLLCGIEIDDSDCIKTSFPNFIEILSNLGARIDY</sequence>
<feature type="chain" id="PRO_0000325338" description="3-phosphoshikimate 1-carboxyvinyltransferase">
    <location>
        <begin position="1"/>
        <end position="428"/>
    </location>
</feature>
<feature type="active site" description="Proton acceptor" evidence="1">
    <location>
        <position position="313"/>
    </location>
</feature>
<feature type="binding site" evidence="1">
    <location>
        <position position="21"/>
    </location>
    <ligand>
        <name>3-phosphoshikimate</name>
        <dbReference type="ChEBI" id="CHEBI:145989"/>
    </ligand>
</feature>
<feature type="binding site" evidence="1">
    <location>
        <position position="21"/>
    </location>
    <ligand>
        <name>phosphoenolpyruvate</name>
        <dbReference type="ChEBI" id="CHEBI:58702"/>
    </ligand>
</feature>
<feature type="binding site" evidence="1">
    <location>
        <position position="22"/>
    </location>
    <ligand>
        <name>3-phosphoshikimate</name>
        <dbReference type="ChEBI" id="CHEBI:145989"/>
    </ligand>
</feature>
<feature type="binding site" evidence="1">
    <location>
        <position position="26"/>
    </location>
    <ligand>
        <name>3-phosphoshikimate</name>
        <dbReference type="ChEBI" id="CHEBI:145989"/>
    </ligand>
</feature>
<feature type="binding site" evidence="1">
    <location>
        <position position="91"/>
    </location>
    <ligand>
        <name>phosphoenolpyruvate</name>
        <dbReference type="ChEBI" id="CHEBI:58702"/>
    </ligand>
</feature>
<feature type="binding site" evidence="1">
    <location>
        <position position="119"/>
    </location>
    <ligand>
        <name>phosphoenolpyruvate</name>
        <dbReference type="ChEBI" id="CHEBI:58702"/>
    </ligand>
</feature>
<feature type="binding site" evidence="1">
    <location>
        <position position="164"/>
    </location>
    <ligand>
        <name>3-phosphoshikimate</name>
        <dbReference type="ChEBI" id="CHEBI:145989"/>
    </ligand>
</feature>
<feature type="binding site" evidence="1">
    <location>
        <position position="166"/>
    </location>
    <ligand>
        <name>3-phosphoshikimate</name>
        <dbReference type="ChEBI" id="CHEBI:145989"/>
    </ligand>
</feature>
<feature type="binding site" evidence="1">
    <location>
        <position position="166"/>
    </location>
    <ligand>
        <name>phosphoenolpyruvate</name>
        <dbReference type="ChEBI" id="CHEBI:58702"/>
    </ligand>
</feature>
<feature type="binding site" evidence="1">
    <location>
        <position position="313"/>
    </location>
    <ligand>
        <name>3-phosphoshikimate</name>
        <dbReference type="ChEBI" id="CHEBI:145989"/>
    </ligand>
</feature>
<feature type="binding site" evidence="1">
    <location>
        <position position="340"/>
    </location>
    <ligand>
        <name>3-phosphoshikimate</name>
        <dbReference type="ChEBI" id="CHEBI:145989"/>
    </ligand>
</feature>
<feature type="binding site" evidence="1">
    <location>
        <position position="344"/>
    </location>
    <ligand>
        <name>phosphoenolpyruvate</name>
        <dbReference type="ChEBI" id="CHEBI:58702"/>
    </ligand>
</feature>
<feature type="binding site" evidence="1">
    <location>
        <position position="386"/>
    </location>
    <ligand>
        <name>phosphoenolpyruvate</name>
        <dbReference type="ChEBI" id="CHEBI:58702"/>
    </ligand>
</feature>
<keyword id="KW-0028">Amino-acid biosynthesis</keyword>
<keyword id="KW-0057">Aromatic amino acid biosynthesis</keyword>
<keyword id="KW-0963">Cytoplasm</keyword>
<keyword id="KW-0808">Transferase</keyword>
<comment type="function">
    <text evidence="1">Catalyzes the transfer of the enolpyruvyl moiety of phosphoenolpyruvate (PEP) to the 5-hydroxyl of shikimate-3-phosphate (S3P) to produce enolpyruvyl shikimate-3-phosphate and inorganic phosphate.</text>
</comment>
<comment type="catalytic activity">
    <reaction evidence="1">
        <text>3-phosphoshikimate + phosphoenolpyruvate = 5-O-(1-carboxyvinyl)-3-phosphoshikimate + phosphate</text>
        <dbReference type="Rhea" id="RHEA:21256"/>
        <dbReference type="ChEBI" id="CHEBI:43474"/>
        <dbReference type="ChEBI" id="CHEBI:57701"/>
        <dbReference type="ChEBI" id="CHEBI:58702"/>
        <dbReference type="ChEBI" id="CHEBI:145989"/>
        <dbReference type="EC" id="2.5.1.19"/>
    </reaction>
    <physiologicalReaction direction="left-to-right" evidence="1">
        <dbReference type="Rhea" id="RHEA:21257"/>
    </physiologicalReaction>
</comment>
<comment type="pathway">
    <text evidence="1">Metabolic intermediate biosynthesis; chorismate biosynthesis; chorismate from D-erythrose 4-phosphate and phosphoenolpyruvate: step 6/7.</text>
</comment>
<comment type="subunit">
    <text evidence="1">Monomer.</text>
</comment>
<comment type="subcellular location">
    <subcellularLocation>
        <location evidence="1">Cytoplasm</location>
    </subcellularLocation>
</comment>
<comment type="similarity">
    <text evidence="1">Belongs to the EPSP synthase family.</text>
</comment>
<comment type="sequence caution" evidence="2">
    <conflict type="erroneous initiation">
        <sequence resource="EMBL-CDS" id="ABS43964"/>
    </conflict>
    <text>Truncated N-terminus.</text>
</comment>